<name>SURE_CAMC5</name>
<organism>
    <name type="scientific">Campylobacter curvus (strain 525.92)</name>
    <dbReference type="NCBI Taxonomy" id="360105"/>
    <lineage>
        <taxon>Bacteria</taxon>
        <taxon>Pseudomonadati</taxon>
        <taxon>Campylobacterota</taxon>
        <taxon>Epsilonproteobacteria</taxon>
        <taxon>Campylobacterales</taxon>
        <taxon>Campylobacteraceae</taxon>
        <taxon>Campylobacter</taxon>
    </lineage>
</organism>
<gene>
    <name evidence="1" type="primary">surE</name>
    <name type="ordered locus">Ccur92_15890</name>
    <name type="ORF">CCV52592_1650</name>
</gene>
<proteinExistence type="inferred from homology"/>
<dbReference type="EC" id="3.1.3.5" evidence="1"/>
<dbReference type="EMBL" id="CP000767">
    <property type="protein sequence ID" value="EAU01019.2"/>
    <property type="molecule type" value="Genomic_DNA"/>
</dbReference>
<dbReference type="RefSeq" id="WP_009650911.1">
    <property type="nucleotide sequence ID" value="NC_009715.2"/>
</dbReference>
<dbReference type="SMR" id="A7H0A1"/>
<dbReference type="STRING" id="360105.CCV52592_1650"/>
<dbReference type="KEGG" id="ccv:CCV52592_1650"/>
<dbReference type="HOGENOM" id="CLU_045192_1_2_7"/>
<dbReference type="OrthoDB" id="9780815at2"/>
<dbReference type="Proteomes" id="UP000006380">
    <property type="component" value="Chromosome"/>
</dbReference>
<dbReference type="GO" id="GO:0005737">
    <property type="term" value="C:cytoplasm"/>
    <property type="evidence" value="ECO:0007669"/>
    <property type="project" value="UniProtKB-SubCell"/>
</dbReference>
<dbReference type="GO" id="GO:0008254">
    <property type="term" value="F:3'-nucleotidase activity"/>
    <property type="evidence" value="ECO:0007669"/>
    <property type="project" value="TreeGrafter"/>
</dbReference>
<dbReference type="GO" id="GO:0008253">
    <property type="term" value="F:5'-nucleotidase activity"/>
    <property type="evidence" value="ECO:0007669"/>
    <property type="project" value="UniProtKB-UniRule"/>
</dbReference>
<dbReference type="GO" id="GO:0004309">
    <property type="term" value="F:exopolyphosphatase activity"/>
    <property type="evidence" value="ECO:0007669"/>
    <property type="project" value="TreeGrafter"/>
</dbReference>
<dbReference type="GO" id="GO:0046872">
    <property type="term" value="F:metal ion binding"/>
    <property type="evidence" value="ECO:0007669"/>
    <property type="project" value="UniProtKB-UniRule"/>
</dbReference>
<dbReference type="GO" id="GO:0000166">
    <property type="term" value="F:nucleotide binding"/>
    <property type="evidence" value="ECO:0007669"/>
    <property type="project" value="UniProtKB-KW"/>
</dbReference>
<dbReference type="FunFam" id="3.40.1210.10:FF:000001">
    <property type="entry name" value="5'/3'-nucleotidase SurE"/>
    <property type="match status" value="1"/>
</dbReference>
<dbReference type="Gene3D" id="3.40.1210.10">
    <property type="entry name" value="Survival protein SurE-like phosphatase/nucleotidase"/>
    <property type="match status" value="1"/>
</dbReference>
<dbReference type="HAMAP" id="MF_00060">
    <property type="entry name" value="SurE"/>
    <property type="match status" value="1"/>
</dbReference>
<dbReference type="InterPro" id="IPR030048">
    <property type="entry name" value="SurE"/>
</dbReference>
<dbReference type="InterPro" id="IPR002828">
    <property type="entry name" value="SurE-like_Pase/nucleotidase"/>
</dbReference>
<dbReference type="InterPro" id="IPR036523">
    <property type="entry name" value="SurE-like_sf"/>
</dbReference>
<dbReference type="NCBIfam" id="NF001490">
    <property type="entry name" value="PRK00346.1-4"/>
    <property type="match status" value="1"/>
</dbReference>
<dbReference type="NCBIfam" id="NF001494">
    <property type="entry name" value="PRK00346.2-4"/>
    <property type="match status" value="1"/>
</dbReference>
<dbReference type="NCBIfam" id="TIGR00087">
    <property type="entry name" value="surE"/>
    <property type="match status" value="1"/>
</dbReference>
<dbReference type="PANTHER" id="PTHR30457">
    <property type="entry name" value="5'-NUCLEOTIDASE SURE"/>
    <property type="match status" value="1"/>
</dbReference>
<dbReference type="PANTHER" id="PTHR30457:SF12">
    <property type="entry name" value="5'_3'-NUCLEOTIDASE SURE"/>
    <property type="match status" value="1"/>
</dbReference>
<dbReference type="Pfam" id="PF01975">
    <property type="entry name" value="SurE"/>
    <property type="match status" value="1"/>
</dbReference>
<dbReference type="SUPFAM" id="SSF64167">
    <property type="entry name" value="SurE-like"/>
    <property type="match status" value="1"/>
</dbReference>
<reference key="1">
    <citation type="submission" date="2007-07" db="EMBL/GenBank/DDBJ databases">
        <title>Genome sequence of Campylobacter curvus 525.92 isolated from human feces.</title>
        <authorList>
            <person name="Fouts D.E."/>
            <person name="Mongodin E.F."/>
            <person name="Puiu D."/>
            <person name="Sebastian Y."/>
            <person name="Miller W.G."/>
            <person name="Mandrell R.E."/>
            <person name="Lastovica A.J."/>
            <person name="Nelson K.E."/>
        </authorList>
    </citation>
    <scope>NUCLEOTIDE SEQUENCE [LARGE SCALE GENOMIC DNA]</scope>
    <source>
        <strain>525.92</strain>
    </source>
</reference>
<comment type="function">
    <text evidence="1">Nucleotidase that shows phosphatase activity on nucleoside 5'-monophosphates.</text>
</comment>
<comment type="catalytic activity">
    <reaction evidence="1">
        <text>a ribonucleoside 5'-phosphate + H2O = a ribonucleoside + phosphate</text>
        <dbReference type="Rhea" id="RHEA:12484"/>
        <dbReference type="ChEBI" id="CHEBI:15377"/>
        <dbReference type="ChEBI" id="CHEBI:18254"/>
        <dbReference type="ChEBI" id="CHEBI:43474"/>
        <dbReference type="ChEBI" id="CHEBI:58043"/>
        <dbReference type="EC" id="3.1.3.5"/>
    </reaction>
</comment>
<comment type="cofactor">
    <cofactor evidence="1">
        <name>a divalent metal cation</name>
        <dbReference type="ChEBI" id="CHEBI:60240"/>
    </cofactor>
    <text evidence="1">Binds 1 divalent metal cation per subunit.</text>
</comment>
<comment type="subcellular location">
    <subcellularLocation>
        <location evidence="1">Cytoplasm</location>
    </subcellularLocation>
</comment>
<comment type="similarity">
    <text evidence="1">Belongs to the SurE nucleotidase family.</text>
</comment>
<protein>
    <recommendedName>
        <fullName evidence="1">5'-nucleotidase SurE</fullName>
        <ecNumber evidence="1">3.1.3.5</ecNumber>
    </recommendedName>
    <alternativeName>
        <fullName evidence="1">Nucleoside 5'-monophosphate phosphohydrolase</fullName>
    </alternativeName>
</protein>
<keyword id="KW-0963">Cytoplasm</keyword>
<keyword id="KW-0378">Hydrolase</keyword>
<keyword id="KW-0479">Metal-binding</keyword>
<keyword id="KW-0547">Nucleotide-binding</keyword>
<keyword id="KW-1185">Reference proteome</keyword>
<sequence>MKEILITNDDGFEAKGLHELADALRQIPDVNVTIVAPSSEKSACAHSLTLTKPLRFIKIDDNFFKLDDATPSDCVYLALHALYQKKPDLVISGINHGANLGEDITYSGTCGAAMEGVLQGIKSIAFSQFYKNNSIEELGFSLACQIVKFIVPRVLEGEICLPQRQFLNVNIPAVAARDFKGYKVAPAGRRCYATHATLNRNPRGVEYYWLGNAALDYEEGQISDISVINDGFASLTPIQLDMTAHASLENLKKSFQ</sequence>
<evidence type="ECO:0000255" key="1">
    <source>
        <dbReference type="HAMAP-Rule" id="MF_00060"/>
    </source>
</evidence>
<accession>A7H0A1</accession>
<feature type="chain" id="PRO_1000007714" description="5'-nucleotidase SurE">
    <location>
        <begin position="1"/>
        <end position="256"/>
    </location>
</feature>
<feature type="binding site" evidence="1">
    <location>
        <position position="9"/>
    </location>
    <ligand>
        <name>a divalent metal cation</name>
        <dbReference type="ChEBI" id="CHEBI:60240"/>
    </ligand>
</feature>
<feature type="binding site" evidence="1">
    <location>
        <position position="10"/>
    </location>
    <ligand>
        <name>a divalent metal cation</name>
        <dbReference type="ChEBI" id="CHEBI:60240"/>
    </ligand>
</feature>
<feature type="binding site" evidence="1">
    <location>
        <position position="42"/>
    </location>
    <ligand>
        <name>a divalent metal cation</name>
        <dbReference type="ChEBI" id="CHEBI:60240"/>
    </ligand>
</feature>
<feature type="binding site" evidence="1">
    <location>
        <position position="95"/>
    </location>
    <ligand>
        <name>a divalent metal cation</name>
        <dbReference type="ChEBI" id="CHEBI:60240"/>
    </ligand>
</feature>